<organism>
    <name type="scientific">Drosophila miranda</name>
    <name type="common">Fruit fly</name>
    <dbReference type="NCBI Taxonomy" id="7229"/>
    <lineage>
        <taxon>Eukaryota</taxon>
        <taxon>Metazoa</taxon>
        <taxon>Ecdysozoa</taxon>
        <taxon>Arthropoda</taxon>
        <taxon>Hexapoda</taxon>
        <taxon>Insecta</taxon>
        <taxon>Pterygota</taxon>
        <taxon>Neoptera</taxon>
        <taxon>Endopterygota</taxon>
        <taxon>Diptera</taxon>
        <taxon>Brachycera</taxon>
        <taxon>Muscomorpha</taxon>
        <taxon>Ephydroidea</taxon>
        <taxon>Drosophilidae</taxon>
        <taxon>Drosophila</taxon>
        <taxon>Sophophora</taxon>
    </lineage>
</organism>
<comment type="function">
    <text>Component of the larval cuticle.</text>
</comment>
<evidence type="ECO:0000255" key="1">
    <source>
        <dbReference type="PROSITE-ProRule" id="PRU00497"/>
    </source>
</evidence>
<evidence type="ECO:0000269" key="2">
    <source>
    </source>
</evidence>
<dbReference type="EMBL" id="X97809">
    <property type="protein sequence ID" value="CAA66390.1"/>
    <property type="molecule type" value="Genomic_DNA"/>
</dbReference>
<dbReference type="EMBL" id="AF219246">
    <property type="protein sequence ID" value="AAF74425.1"/>
    <property type="molecule type" value="Genomic_DNA"/>
</dbReference>
<dbReference type="EMBL" id="AF219247">
    <property type="protein sequence ID" value="AAF74426.1"/>
    <property type="molecule type" value="Genomic_DNA"/>
</dbReference>
<dbReference type="EMBL" id="AF219253">
    <property type="protein sequence ID" value="AAF74432.1"/>
    <property type="molecule type" value="Genomic_DNA"/>
</dbReference>
<dbReference type="EMBL" id="AF219254">
    <property type="protein sequence ID" value="AAF74433.1"/>
    <property type="molecule type" value="Genomic_DNA"/>
</dbReference>
<dbReference type="EMBL" id="AF219255">
    <property type="protein sequence ID" value="AAF74434.1"/>
    <property type="molecule type" value="Genomic_DNA"/>
</dbReference>
<dbReference type="EMBL" id="AF219256">
    <property type="protein sequence ID" value="AAF74435.1"/>
    <property type="molecule type" value="Genomic_DNA"/>
</dbReference>
<dbReference type="EMBL" id="DQ867949">
    <property type="protein sequence ID" value="ABJ74489.1"/>
    <property type="molecule type" value="Genomic_DNA"/>
</dbReference>
<dbReference type="EMBL" id="DQ867950">
    <property type="protein sequence ID" value="ABJ74490.1"/>
    <property type="molecule type" value="Genomic_DNA"/>
</dbReference>
<dbReference type="EMBL" id="DQ867951">
    <property type="protein sequence ID" value="ABJ74491.1"/>
    <property type="molecule type" value="Genomic_DNA"/>
</dbReference>
<dbReference type="EMBL" id="DQ867952">
    <property type="protein sequence ID" value="ABJ74492.1"/>
    <property type="molecule type" value="Genomic_DNA"/>
</dbReference>
<dbReference type="EMBL" id="DQ867953">
    <property type="protein sequence ID" value="ABJ74493.1"/>
    <property type="molecule type" value="Genomic_DNA"/>
</dbReference>
<dbReference type="EMBL" id="DQ867954">
    <property type="protein sequence ID" value="ABJ74494.1"/>
    <property type="molecule type" value="Genomic_DNA"/>
</dbReference>
<dbReference type="EMBL" id="DQ867955">
    <property type="protein sequence ID" value="ABJ74495.1"/>
    <property type="molecule type" value="Genomic_DNA"/>
</dbReference>
<dbReference type="EMBL" id="DQ867956">
    <property type="protein sequence ID" value="ABJ74496.1"/>
    <property type="molecule type" value="Genomic_DNA"/>
</dbReference>
<dbReference type="EMBL" id="DQ867957">
    <property type="protein sequence ID" value="ABJ74497.1"/>
    <property type="molecule type" value="Genomic_DNA"/>
</dbReference>
<dbReference type="EMBL" id="DQ867958">
    <property type="protein sequence ID" value="ABJ74498.1"/>
    <property type="molecule type" value="Genomic_DNA"/>
</dbReference>
<dbReference type="EMBL" id="DQ867959">
    <property type="protein sequence ID" value="ABJ74499.1"/>
    <property type="molecule type" value="Genomic_DNA"/>
</dbReference>
<dbReference type="EMBL" id="DQ867960">
    <property type="protein sequence ID" value="ABJ74500.1"/>
    <property type="molecule type" value="Genomic_DNA"/>
</dbReference>
<dbReference type="EMBL" id="DQ867961">
    <property type="protein sequence ID" value="ABJ74501.1"/>
    <property type="molecule type" value="Genomic_DNA"/>
</dbReference>
<dbReference type="EMBL" id="DQ867962">
    <property type="protein sequence ID" value="ABJ74502.1"/>
    <property type="molecule type" value="Genomic_DNA"/>
</dbReference>
<dbReference type="EMBL" id="DQ867963">
    <property type="protein sequence ID" value="ABJ74503.1"/>
    <property type="molecule type" value="Genomic_DNA"/>
</dbReference>
<dbReference type="EMBL" id="DQ867964">
    <property type="protein sequence ID" value="ABJ74504.1"/>
    <property type="molecule type" value="Genomic_DNA"/>
</dbReference>
<dbReference type="EMBL" id="DQ867965">
    <property type="protein sequence ID" value="ABJ74505.1"/>
    <property type="molecule type" value="Genomic_DNA"/>
</dbReference>
<dbReference type="EMBL" id="DQ867966">
    <property type="protein sequence ID" value="ABJ74506.1"/>
    <property type="molecule type" value="Genomic_DNA"/>
</dbReference>
<dbReference type="EMBL" id="DQ867967">
    <property type="protein sequence ID" value="ABJ74507.1"/>
    <property type="molecule type" value="Genomic_DNA"/>
</dbReference>
<dbReference type="EMBL" id="DQ867968">
    <property type="protein sequence ID" value="ABJ74508.1"/>
    <property type="molecule type" value="Genomic_DNA"/>
</dbReference>
<dbReference type="EMBL" id="DQ867969">
    <property type="protein sequence ID" value="ABJ74509.1"/>
    <property type="molecule type" value="Genomic_DNA"/>
</dbReference>
<dbReference type="EMBL" id="DQ867970">
    <property type="protein sequence ID" value="ABJ74510.1"/>
    <property type="molecule type" value="Genomic_DNA"/>
</dbReference>
<dbReference type="EMBL" id="DQ867971">
    <property type="protein sequence ID" value="ABJ74511.1"/>
    <property type="molecule type" value="Genomic_DNA"/>
</dbReference>
<dbReference type="EMBL" id="DQ867972">
    <property type="protein sequence ID" value="ABJ74512.1"/>
    <property type="molecule type" value="Genomic_DNA"/>
</dbReference>
<dbReference type="EnsemblMetazoa" id="XM_017295226.2">
    <property type="protein sequence ID" value="XP_017150715.1"/>
    <property type="gene ID" value="LOC108160938"/>
</dbReference>
<dbReference type="GeneID" id="108160938"/>
<dbReference type="KEGG" id="dmn:108160938"/>
<dbReference type="OMA" id="QGKFGWI"/>
<dbReference type="OrthoDB" id="58324at7215"/>
<dbReference type="GO" id="GO:0062129">
    <property type="term" value="C:chitin-based extracellular matrix"/>
    <property type="evidence" value="ECO:0007669"/>
    <property type="project" value="TreeGrafter"/>
</dbReference>
<dbReference type="GO" id="GO:0008010">
    <property type="term" value="F:structural constituent of chitin-based larval cuticle"/>
    <property type="evidence" value="ECO:0007669"/>
    <property type="project" value="TreeGrafter"/>
</dbReference>
<dbReference type="InterPro" id="IPR031311">
    <property type="entry name" value="CHIT_BIND_RR_consensus"/>
</dbReference>
<dbReference type="InterPro" id="IPR050468">
    <property type="entry name" value="Cuticle_Struct_Prot"/>
</dbReference>
<dbReference type="InterPro" id="IPR000618">
    <property type="entry name" value="Insect_cuticle"/>
</dbReference>
<dbReference type="PANTHER" id="PTHR10380">
    <property type="entry name" value="CUTICLE PROTEIN"/>
    <property type="match status" value="1"/>
</dbReference>
<dbReference type="PANTHER" id="PTHR10380:SF237">
    <property type="entry name" value="CUTICULAR PROTEIN 65AU, ISOFORM A-RELATED"/>
    <property type="match status" value="1"/>
</dbReference>
<dbReference type="Pfam" id="PF00379">
    <property type="entry name" value="Chitin_bind_4"/>
    <property type="match status" value="1"/>
</dbReference>
<dbReference type="PROSITE" id="PS00233">
    <property type="entry name" value="CHIT_BIND_RR_1"/>
    <property type="match status" value="1"/>
</dbReference>
<dbReference type="PROSITE" id="PS51155">
    <property type="entry name" value="CHIT_BIND_RR_2"/>
    <property type="match status" value="1"/>
</dbReference>
<name>LCP1_DROMI</name>
<gene>
    <name type="primary">Lcp1</name>
</gene>
<accession>P91627</accession>
<accession>A1BWX7</accession>
<accession>A1BWX9</accession>
<accession>A1BWY7</accession>
<accession>A1BWY9</accession>
<accession>A1BWZ7</accession>
<accession>P91628</accession>
<accession>Q9NCK7</accession>
<accession>Q9NCK8</accession>
<accession>Q9NCK9</accession>
<feature type="signal peptide" evidence="2">
    <location>
        <begin position="1"/>
        <end position="16"/>
    </location>
</feature>
<feature type="chain" id="PRO_0000006388" description="Larval cuticle protein 1">
    <location>
        <begin position="17"/>
        <end position="138"/>
    </location>
</feature>
<feature type="domain" description="Chitin-binding type R&amp;R" evidence="1">
    <location>
        <begin position="49"/>
        <end position="110"/>
    </location>
</feature>
<feature type="sequence variant" description="In strain: 0101.3, 0101.4, 0101.5, 0101.7, 0101.9, MSH22, MA28, MA32, MSH38, SP138, SP235 and SP295.">
    <original>V</original>
    <variation>L</variation>
    <location>
        <position position="13"/>
    </location>
</feature>
<feature type="sequence variant" description="In strain: 0101.3, 0101.4, 0101.5, 0101.7, 0101.9, MSH22, MA28, MA32, MSH38, SP138, SP235 and SP295.">
    <original>P</original>
    <variation>Q</variation>
    <location>
        <position position="29"/>
    </location>
</feature>
<feature type="sequence variant" description="In strain: 0101.3, 0101.4, 0101.5, 0101.7, 0101.9, MSH22, MA28, MA32, MSH38, SP138, SP235 and SP295.">
    <original>V</original>
    <variation>I</variation>
    <location>
        <position position="47"/>
    </location>
</feature>
<feature type="sequence variant" description="In strain: SP235.">
    <original>F</original>
    <variation>Y</variation>
    <location>
        <position position="52"/>
    </location>
</feature>
<feature type="sequence variant" description="In strain: 0101.5.">
    <original>D</original>
    <variation>H</variation>
    <location>
        <position position="53"/>
    </location>
</feature>
<feature type="sequence variant" description="In strain: MSH22.">
    <original>L</original>
    <variation>F</variation>
    <location>
        <position position="56"/>
    </location>
</feature>
<feature type="sequence variant" description="In strain: 0101.3, 0101.4, 0101.5, 0101.7, 0101.9, MSH22, MA28, MA32, MSH38, SP138, SP235 and SP295.">
    <original>A</original>
    <variation>V</variation>
    <location>
        <position position="129"/>
    </location>
</feature>
<reference key="1">
    <citation type="journal article" date="1993" name="Proc. Natl. Acad. Sci. U.S.A.">
        <title>How Y chromosomes become genetically inert.</title>
        <authorList>
            <person name="Steinemann M."/>
            <person name="Steinemann S."/>
            <person name="Lottspeich F."/>
        </authorList>
    </citation>
    <scope>NUCLEOTIDE SEQUENCE [GENOMIC DNA]</scope>
    <scope>PROTEIN SEQUENCE OF 17-21</scope>
</reference>
<reference key="2">
    <citation type="journal article" date="1996" name="J. Mol. Evol.">
        <title>Evolution of the larval cuticle proteins coded by the secondary sex chromosome pair: X2 and neo-Y of Drosophila miranda: I. Comparison at the DNA sequence level.</title>
        <authorList>
            <person name="Steinemann M."/>
            <person name="Steinemann S."/>
            <person name="Pinsker W."/>
        </authorList>
    </citation>
    <scope>NUCLEOTIDE SEQUENCE [GENOMIC DNA]</scope>
</reference>
<reference key="3">
    <citation type="journal article" date="2000" name="Mol. Biol. Evol.">
        <title>Contrasting patterns of molecular evolution of the genes on the new and old sex chromosomes of Drosophila miranda.</title>
        <authorList>
            <person name="Yi S."/>
            <person name="Charlesworth B."/>
        </authorList>
    </citation>
    <scope>NUCLEOTIDE SEQUENCE [GENOMIC DNA]</scope>
    <source>
        <strain>0101.3</strain>
        <strain>0101.5</strain>
        <strain>0101.9</strain>
        <strain>MSH22</strain>
        <strain>SP138</strain>
        <strain>SP235</strain>
    </source>
</reference>
<reference key="4">
    <citation type="journal article" date="2006" name="Genetics">
        <title>Rates and patterns of chromosomal evolution in Drosophila pseudoobscura and D. miranda.</title>
        <authorList>
            <person name="Bartolome C."/>
            <person name="Charlesworth B."/>
        </authorList>
    </citation>
    <scope>NUCLEOTIDE SEQUENCE [GENOMIC DNA]</scope>
    <source>
        <strain>0101.3</strain>
        <strain>0101.4</strain>
        <strain>0101.5</strain>
        <strain>0101.7</strain>
        <strain>0101.9</strain>
        <strain>MA28</strain>
        <strain>MA32</strain>
        <strain>MSH22</strain>
        <strain>MSH38</strain>
        <strain>SP138</strain>
        <strain>SP235</strain>
        <strain>SP295</strain>
    </source>
</reference>
<reference key="5">
    <citation type="journal article" date="2006" name="Genetics">
        <title>Evolution of amino-acid sequences and codon usage on the Drosophila miranda neo-sex chromosomes.</title>
        <authorList>
            <person name="Bartolome C."/>
            <person name="Charlesworth B."/>
        </authorList>
    </citation>
    <scope>NUCLEOTIDE SEQUENCE [GENOMIC DNA]</scope>
    <source>
        <strain>0101.3</strain>
        <strain>0101.4</strain>
        <strain>0101.5</strain>
        <strain>0101.7</strain>
        <strain>0101.9</strain>
        <strain>MA28</strain>
        <strain>MA32</strain>
        <strain>MSH22</strain>
        <strain>MSH38</strain>
        <strain>SP138</strain>
        <strain>SP235</strain>
        <strain>SP295</strain>
    </source>
</reference>
<sequence>MFKFVMVFAVLGVAAAGVAHVPHPQVSHPVGRSEDVHAEVKSEHSDVRADGFDADLLVSNSIQQASSGDVHGNIHGSFSWISPEGEHVEIKYVADENGYQPVGAVLPTPPPIPEAIARAVAWLEAHPQAPEPVHHSHH</sequence>
<protein>
    <recommendedName>
        <fullName>Larval cuticle protein 1</fullName>
    </recommendedName>
    <alternativeName>
        <fullName>Larval cuticle protein I</fullName>
    </alternativeName>
</protein>
<keyword id="KW-0193">Cuticle</keyword>
<keyword id="KW-0903">Direct protein sequencing</keyword>
<keyword id="KW-0732">Signal</keyword>
<proteinExistence type="evidence at protein level"/>